<organism>
    <name type="scientific">Citrifermentans bemidjiense (strain ATCC BAA-1014 / DSM 16622 / JCM 12645 / Bem)</name>
    <name type="common">Geobacter bemidjiensis</name>
    <dbReference type="NCBI Taxonomy" id="404380"/>
    <lineage>
        <taxon>Bacteria</taxon>
        <taxon>Pseudomonadati</taxon>
        <taxon>Thermodesulfobacteriota</taxon>
        <taxon>Desulfuromonadia</taxon>
        <taxon>Geobacterales</taxon>
        <taxon>Geobacteraceae</taxon>
        <taxon>Citrifermentans</taxon>
    </lineage>
</organism>
<accession>B5EGF2</accession>
<comment type="function">
    <text evidence="1">Catalyzes the reversible conversion of 2-phosphoglycerate (2-PG) into phosphoenolpyruvate (PEP). It is essential for the degradation of carbohydrates via glycolysis.</text>
</comment>
<comment type="catalytic activity">
    <reaction evidence="1">
        <text>(2R)-2-phosphoglycerate = phosphoenolpyruvate + H2O</text>
        <dbReference type="Rhea" id="RHEA:10164"/>
        <dbReference type="ChEBI" id="CHEBI:15377"/>
        <dbReference type="ChEBI" id="CHEBI:58289"/>
        <dbReference type="ChEBI" id="CHEBI:58702"/>
        <dbReference type="EC" id="4.2.1.11"/>
    </reaction>
</comment>
<comment type="cofactor">
    <cofactor evidence="1">
        <name>Mg(2+)</name>
        <dbReference type="ChEBI" id="CHEBI:18420"/>
    </cofactor>
    <text evidence="1">Binds a second Mg(2+) ion via substrate during catalysis.</text>
</comment>
<comment type="pathway">
    <text evidence="1">Carbohydrate degradation; glycolysis; pyruvate from D-glyceraldehyde 3-phosphate: step 4/5.</text>
</comment>
<comment type="subcellular location">
    <subcellularLocation>
        <location evidence="1">Cytoplasm</location>
    </subcellularLocation>
    <subcellularLocation>
        <location evidence="1">Secreted</location>
    </subcellularLocation>
    <subcellularLocation>
        <location evidence="1">Cell surface</location>
    </subcellularLocation>
    <text evidence="1">Fractions of enolase are present in both the cytoplasm and on the cell surface.</text>
</comment>
<comment type="similarity">
    <text evidence="1">Belongs to the enolase family.</text>
</comment>
<gene>
    <name evidence="1" type="primary">eno</name>
    <name type="ordered locus">Gbem_0996</name>
</gene>
<evidence type="ECO:0000255" key="1">
    <source>
        <dbReference type="HAMAP-Rule" id="MF_00318"/>
    </source>
</evidence>
<sequence length="429" mass="46492">MSQITDVYAREILDSRGNPTLEVEVFLDSGVMGRAAVPSGASTGEREALELRDGDKGRYLGKGVEQAVSNVNDIIADEITGMDATDQVGIDKKMLELDGTEFKSRLGANAILGVSLAVAKAAAEEVGVPLYQYIGGCNAKELPLPMMNIINGGAHADNNVDIQEFMIMPAGAANFKEALRMGAEIFHALKSVLKGKGYNTAVGDEGGFAPNLKSNEEALEVIMEAIVKAGYKPGEEVLLALDVASSELFENGVYTLENEAESKKTADQLVDFYENLVNKYPIVSIEDGMAENDWDGWKKLTDRLGKRIQIVGDDLFVTNPSILKEGIKKGIANSILIKLNQIGTLTETLDAIEMAKRAGYTCVISHRSGETEDTTLADLAVAVNAGQIKTGSLCRTDRVCKYNQLLRIEDELDDVAQFRGHEVFYNIKK</sequence>
<proteinExistence type="inferred from homology"/>
<reference key="1">
    <citation type="submission" date="2008-07" db="EMBL/GenBank/DDBJ databases">
        <title>Complete sequence of Geobacter bemidjiensis BEM.</title>
        <authorList>
            <consortium name="US DOE Joint Genome Institute"/>
            <person name="Lucas S."/>
            <person name="Copeland A."/>
            <person name="Lapidus A."/>
            <person name="Glavina del Rio T."/>
            <person name="Dalin E."/>
            <person name="Tice H."/>
            <person name="Bruce D."/>
            <person name="Goodwin L."/>
            <person name="Pitluck S."/>
            <person name="Kiss H."/>
            <person name="Brettin T."/>
            <person name="Detter J.C."/>
            <person name="Han C."/>
            <person name="Kuske C.R."/>
            <person name="Schmutz J."/>
            <person name="Larimer F."/>
            <person name="Land M."/>
            <person name="Hauser L."/>
            <person name="Kyrpides N."/>
            <person name="Lykidis A."/>
            <person name="Lovley D."/>
            <person name="Richardson P."/>
        </authorList>
    </citation>
    <scope>NUCLEOTIDE SEQUENCE [LARGE SCALE GENOMIC DNA]</scope>
    <source>
        <strain>ATCC BAA-1014 / DSM 16622 / JCM 12645 / Bem</strain>
    </source>
</reference>
<feature type="chain" id="PRO_1000115867" description="Enolase">
    <location>
        <begin position="1"/>
        <end position="429"/>
    </location>
</feature>
<feature type="active site" description="Proton donor" evidence="1">
    <location>
        <position position="205"/>
    </location>
</feature>
<feature type="active site" description="Proton acceptor" evidence="1">
    <location>
        <position position="338"/>
    </location>
</feature>
<feature type="binding site" evidence="1">
    <location>
        <position position="163"/>
    </location>
    <ligand>
        <name>(2R)-2-phosphoglycerate</name>
        <dbReference type="ChEBI" id="CHEBI:58289"/>
    </ligand>
</feature>
<feature type="binding site" evidence="1">
    <location>
        <position position="242"/>
    </location>
    <ligand>
        <name>Mg(2+)</name>
        <dbReference type="ChEBI" id="CHEBI:18420"/>
    </ligand>
</feature>
<feature type="binding site" evidence="1">
    <location>
        <position position="286"/>
    </location>
    <ligand>
        <name>Mg(2+)</name>
        <dbReference type="ChEBI" id="CHEBI:18420"/>
    </ligand>
</feature>
<feature type="binding site" evidence="1">
    <location>
        <position position="313"/>
    </location>
    <ligand>
        <name>Mg(2+)</name>
        <dbReference type="ChEBI" id="CHEBI:18420"/>
    </ligand>
</feature>
<feature type="binding site" evidence="1">
    <location>
        <position position="338"/>
    </location>
    <ligand>
        <name>(2R)-2-phosphoglycerate</name>
        <dbReference type="ChEBI" id="CHEBI:58289"/>
    </ligand>
</feature>
<feature type="binding site" evidence="1">
    <location>
        <position position="367"/>
    </location>
    <ligand>
        <name>(2R)-2-phosphoglycerate</name>
        <dbReference type="ChEBI" id="CHEBI:58289"/>
    </ligand>
</feature>
<feature type="binding site" evidence="1">
    <location>
        <position position="368"/>
    </location>
    <ligand>
        <name>(2R)-2-phosphoglycerate</name>
        <dbReference type="ChEBI" id="CHEBI:58289"/>
    </ligand>
</feature>
<feature type="binding site" evidence="1">
    <location>
        <position position="389"/>
    </location>
    <ligand>
        <name>(2R)-2-phosphoglycerate</name>
        <dbReference type="ChEBI" id="CHEBI:58289"/>
    </ligand>
</feature>
<keyword id="KW-0963">Cytoplasm</keyword>
<keyword id="KW-0324">Glycolysis</keyword>
<keyword id="KW-0456">Lyase</keyword>
<keyword id="KW-0460">Magnesium</keyword>
<keyword id="KW-0479">Metal-binding</keyword>
<keyword id="KW-1185">Reference proteome</keyword>
<keyword id="KW-0964">Secreted</keyword>
<name>ENO_CITBB</name>
<dbReference type="EC" id="4.2.1.11" evidence="1"/>
<dbReference type="EMBL" id="CP001124">
    <property type="protein sequence ID" value="ACH38017.1"/>
    <property type="molecule type" value="Genomic_DNA"/>
</dbReference>
<dbReference type="RefSeq" id="WP_012529431.1">
    <property type="nucleotide sequence ID" value="NC_011146.1"/>
</dbReference>
<dbReference type="SMR" id="B5EGF2"/>
<dbReference type="STRING" id="404380.Gbem_0996"/>
<dbReference type="KEGG" id="gbm:Gbem_0996"/>
<dbReference type="eggNOG" id="COG0148">
    <property type="taxonomic scope" value="Bacteria"/>
</dbReference>
<dbReference type="HOGENOM" id="CLU_031223_2_1_7"/>
<dbReference type="OrthoDB" id="9804716at2"/>
<dbReference type="UniPathway" id="UPA00109">
    <property type="reaction ID" value="UER00187"/>
</dbReference>
<dbReference type="Proteomes" id="UP000008825">
    <property type="component" value="Chromosome"/>
</dbReference>
<dbReference type="GO" id="GO:0009986">
    <property type="term" value="C:cell surface"/>
    <property type="evidence" value="ECO:0007669"/>
    <property type="project" value="UniProtKB-SubCell"/>
</dbReference>
<dbReference type="GO" id="GO:0005576">
    <property type="term" value="C:extracellular region"/>
    <property type="evidence" value="ECO:0007669"/>
    <property type="project" value="UniProtKB-SubCell"/>
</dbReference>
<dbReference type="GO" id="GO:0000015">
    <property type="term" value="C:phosphopyruvate hydratase complex"/>
    <property type="evidence" value="ECO:0007669"/>
    <property type="project" value="InterPro"/>
</dbReference>
<dbReference type="GO" id="GO:0000287">
    <property type="term" value="F:magnesium ion binding"/>
    <property type="evidence" value="ECO:0007669"/>
    <property type="project" value="UniProtKB-UniRule"/>
</dbReference>
<dbReference type="GO" id="GO:0004634">
    <property type="term" value="F:phosphopyruvate hydratase activity"/>
    <property type="evidence" value="ECO:0007669"/>
    <property type="project" value="UniProtKB-UniRule"/>
</dbReference>
<dbReference type="GO" id="GO:0006096">
    <property type="term" value="P:glycolytic process"/>
    <property type="evidence" value="ECO:0007669"/>
    <property type="project" value="UniProtKB-UniRule"/>
</dbReference>
<dbReference type="CDD" id="cd03313">
    <property type="entry name" value="enolase"/>
    <property type="match status" value="1"/>
</dbReference>
<dbReference type="FunFam" id="3.20.20.120:FF:000001">
    <property type="entry name" value="Enolase"/>
    <property type="match status" value="1"/>
</dbReference>
<dbReference type="FunFam" id="3.30.390.10:FF:000001">
    <property type="entry name" value="Enolase"/>
    <property type="match status" value="1"/>
</dbReference>
<dbReference type="Gene3D" id="3.20.20.120">
    <property type="entry name" value="Enolase-like C-terminal domain"/>
    <property type="match status" value="1"/>
</dbReference>
<dbReference type="Gene3D" id="3.30.390.10">
    <property type="entry name" value="Enolase-like, N-terminal domain"/>
    <property type="match status" value="1"/>
</dbReference>
<dbReference type="HAMAP" id="MF_00318">
    <property type="entry name" value="Enolase"/>
    <property type="match status" value="1"/>
</dbReference>
<dbReference type="InterPro" id="IPR000941">
    <property type="entry name" value="Enolase"/>
</dbReference>
<dbReference type="InterPro" id="IPR036849">
    <property type="entry name" value="Enolase-like_C_sf"/>
</dbReference>
<dbReference type="InterPro" id="IPR029017">
    <property type="entry name" value="Enolase-like_N"/>
</dbReference>
<dbReference type="InterPro" id="IPR020810">
    <property type="entry name" value="Enolase_C"/>
</dbReference>
<dbReference type="InterPro" id="IPR020809">
    <property type="entry name" value="Enolase_CS"/>
</dbReference>
<dbReference type="InterPro" id="IPR020811">
    <property type="entry name" value="Enolase_N"/>
</dbReference>
<dbReference type="NCBIfam" id="TIGR01060">
    <property type="entry name" value="eno"/>
    <property type="match status" value="1"/>
</dbReference>
<dbReference type="PANTHER" id="PTHR11902">
    <property type="entry name" value="ENOLASE"/>
    <property type="match status" value="1"/>
</dbReference>
<dbReference type="PANTHER" id="PTHR11902:SF1">
    <property type="entry name" value="ENOLASE"/>
    <property type="match status" value="1"/>
</dbReference>
<dbReference type="Pfam" id="PF00113">
    <property type="entry name" value="Enolase_C"/>
    <property type="match status" value="1"/>
</dbReference>
<dbReference type="Pfam" id="PF03952">
    <property type="entry name" value="Enolase_N"/>
    <property type="match status" value="1"/>
</dbReference>
<dbReference type="PIRSF" id="PIRSF001400">
    <property type="entry name" value="Enolase"/>
    <property type="match status" value="1"/>
</dbReference>
<dbReference type="PRINTS" id="PR00148">
    <property type="entry name" value="ENOLASE"/>
</dbReference>
<dbReference type="SFLD" id="SFLDF00002">
    <property type="entry name" value="enolase"/>
    <property type="match status" value="1"/>
</dbReference>
<dbReference type="SFLD" id="SFLDG00178">
    <property type="entry name" value="enolase"/>
    <property type="match status" value="1"/>
</dbReference>
<dbReference type="SMART" id="SM01192">
    <property type="entry name" value="Enolase_C"/>
    <property type="match status" value="1"/>
</dbReference>
<dbReference type="SMART" id="SM01193">
    <property type="entry name" value="Enolase_N"/>
    <property type="match status" value="1"/>
</dbReference>
<dbReference type="SUPFAM" id="SSF51604">
    <property type="entry name" value="Enolase C-terminal domain-like"/>
    <property type="match status" value="1"/>
</dbReference>
<dbReference type="SUPFAM" id="SSF54826">
    <property type="entry name" value="Enolase N-terminal domain-like"/>
    <property type="match status" value="1"/>
</dbReference>
<dbReference type="PROSITE" id="PS00164">
    <property type="entry name" value="ENOLASE"/>
    <property type="match status" value="1"/>
</dbReference>
<protein>
    <recommendedName>
        <fullName evidence="1">Enolase</fullName>
        <ecNumber evidence="1">4.2.1.11</ecNumber>
    </recommendedName>
    <alternativeName>
        <fullName evidence="1">2-phospho-D-glycerate hydro-lyase</fullName>
    </alternativeName>
    <alternativeName>
        <fullName evidence="1">2-phosphoglycerate dehydratase</fullName>
    </alternativeName>
</protein>